<sequence length="209" mass="24083">MAEVQPTRMELIKLRRRIKMATRGHALLKMKRDGLIMEFRQLLEEAKEVIGGMVQKYEKAQSKLALAIAVDGIVAVRSIALSCCQIPPEFSMKRKNIMGVVVPVIKREPIRKKPTERGYGILSTSTRVDEAVEAYEELVDAVLEVAEIETTLRKLIEEIERTKRRVNALEYRVIPTMEELAKFISFKLEEMDRENIIRLKKLKMKKAKS</sequence>
<proteinExistence type="inferred from homology"/>
<gene>
    <name evidence="1" type="primary">atpD</name>
    <name type="ordered locus">AF_1168</name>
</gene>
<accession>O29099</accession>
<name>AATD_ARCFU</name>
<protein>
    <recommendedName>
        <fullName evidence="1">A-type ATP synthase subunit D</fullName>
    </recommendedName>
</protein>
<keyword id="KW-0066">ATP synthesis</keyword>
<keyword id="KW-1003">Cell membrane</keyword>
<keyword id="KW-0375">Hydrogen ion transport</keyword>
<keyword id="KW-0406">Ion transport</keyword>
<keyword id="KW-0472">Membrane</keyword>
<keyword id="KW-1185">Reference proteome</keyword>
<keyword id="KW-0813">Transport</keyword>
<dbReference type="EMBL" id="AE000782">
    <property type="protein sequence ID" value="AAB90072.1"/>
    <property type="molecule type" value="Genomic_DNA"/>
</dbReference>
<dbReference type="PIR" id="G69395">
    <property type="entry name" value="G69395"/>
</dbReference>
<dbReference type="RefSeq" id="WP_010878664.1">
    <property type="nucleotide sequence ID" value="NC_000917.1"/>
</dbReference>
<dbReference type="SMR" id="O29099"/>
<dbReference type="STRING" id="224325.AF_1168"/>
<dbReference type="PaxDb" id="224325-AF_1168"/>
<dbReference type="EnsemblBacteria" id="AAB90072">
    <property type="protein sequence ID" value="AAB90072"/>
    <property type="gene ID" value="AF_1168"/>
</dbReference>
<dbReference type="KEGG" id="afu:AF_1168"/>
<dbReference type="eggNOG" id="arCOG04101">
    <property type="taxonomic scope" value="Archaea"/>
</dbReference>
<dbReference type="HOGENOM" id="CLU_069688_2_1_2"/>
<dbReference type="OrthoDB" id="117390at2157"/>
<dbReference type="PhylomeDB" id="O29099"/>
<dbReference type="Proteomes" id="UP000002199">
    <property type="component" value="Chromosome"/>
</dbReference>
<dbReference type="GO" id="GO:0005886">
    <property type="term" value="C:plasma membrane"/>
    <property type="evidence" value="ECO:0007669"/>
    <property type="project" value="UniProtKB-SubCell"/>
</dbReference>
<dbReference type="GO" id="GO:0005524">
    <property type="term" value="F:ATP binding"/>
    <property type="evidence" value="ECO:0007669"/>
    <property type="project" value="UniProtKB-UniRule"/>
</dbReference>
<dbReference type="GO" id="GO:0046933">
    <property type="term" value="F:proton-transporting ATP synthase activity, rotational mechanism"/>
    <property type="evidence" value="ECO:0007669"/>
    <property type="project" value="UniProtKB-UniRule"/>
</dbReference>
<dbReference type="GO" id="GO:0046961">
    <property type="term" value="F:proton-transporting ATPase activity, rotational mechanism"/>
    <property type="evidence" value="ECO:0007669"/>
    <property type="project" value="InterPro"/>
</dbReference>
<dbReference type="GO" id="GO:0042777">
    <property type="term" value="P:proton motive force-driven plasma membrane ATP synthesis"/>
    <property type="evidence" value="ECO:0007669"/>
    <property type="project" value="UniProtKB-UniRule"/>
</dbReference>
<dbReference type="FunFam" id="1.10.287.3240:FF:000007">
    <property type="entry name" value="V-type ATP synthase subunit D"/>
    <property type="match status" value="1"/>
</dbReference>
<dbReference type="Gene3D" id="1.10.287.3240">
    <property type="match status" value="1"/>
</dbReference>
<dbReference type="HAMAP" id="MF_00271">
    <property type="entry name" value="ATP_synth_D_arch"/>
    <property type="match status" value="1"/>
</dbReference>
<dbReference type="InterPro" id="IPR002699">
    <property type="entry name" value="V_ATPase_D"/>
</dbReference>
<dbReference type="NCBIfam" id="NF001542">
    <property type="entry name" value="PRK00373.1-1"/>
    <property type="match status" value="1"/>
</dbReference>
<dbReference type="NCBIfam" id="TIGR00309">
    <property type="entry name" value="V_ATPase_subD"/>
    <property type="match status" value="1"/>
</dbReference>
<dbReference type="PANTHER" id="PTHR11671">
    <property type="entry name" value="V-TYPE ATP SYNTHASE SUBUNIT D"/>
    <property type="match status" value="1"/>
</dbReference>
<dbReference type="Pfam" id="PF01813">
    <property type="entry name" value="ATP-synt_D"/>
    <property type="match status" value="1"/>
</dbReference>
<reference key="1">
    <citation type="journal article" date="1997" name="Nature">
        <title>The complete genome sequence of the hyperthermophilic, sulphate-reducing archaeon Archaeoglobus fulgidus.</title>
        <authorList>
            <person name="Klenk H.-P."/>
            <person name="Clayton R.A."/>
            <person name="Tomb J.-F."/>
            <person name="White O."/>
            <person name="Nelson K.E."/>
            <person name="Ketchum K.A."/>
            <person name="Dodson R.J."/>
            <person name="Gwinn M.L."/>
            <person name="Hickey E.K."/>
            <person name="Peterson J.D."/>
            <person name="Richardson D.L."/>
            <person name="Kerlavage A.R."/>
            <person name="Graham D.E."/>
            <person name="Kyrpides N.C."/>
            <person name="Fleischmann R.D."/>
            <person name="Quackenbush J."/>
            <person name="Lee N.H."/>
            <person name="Sutton G.G."/>
            <person name="Gill S.R."/>
            <person name="Kirkness E.F."/>
            <person name="Dougherty B.A."/>
            <person name="McKenney K."/>
            <person name="Adams M.D."/>
            <person name="Loftus B.J."/>
            <person name="Peterson S.N."/>
            <person name="Reich C.I."/>
            <person name="McNeil L.K."/>
            <person name="Badger J.H."/>
            <person name="Glodek A."/>
            <person name="Zhou L."/>
            <person name="Overbeek R."/>
            <person name="Gocayne J.D."/>
            <person name="Weidman J.F."/>
            <person name="McDonald L.A."/>
            <person name="Utterback T.R."/>
            <person name="Cotton M.D."/>
            <person name="Spriggs T."/>
            <person name="Artiach P."/>
            <person name="Kaine B.P."/>
            <person name="Sykes S.M."/>
            <person name="Sadow P.W."/>
            <person name="D'Andrea K.P."/>
            <person name="Bowman C."/>
            <person name="Fujii C."/>
            <person name="Garland S.A."/>
            <person name="Mason T.M."/>
            <person name="Olsen G.J."/>
            <person name="Fraser C.M."/>
            <person name="Smith H.O."/>
            <person name="Woese C.R."/>
            <person name="Venter J.C."/>
        </authorList>
    </citation>
    <scope>NUCLEOTIDE SEQUENCE [LARGE SCALE GENOMIC DNA]</scope>
    <source>
        <strain>ATCC 49558 / DSM 4304 / JCM 9628 / NBRC 100126 / VC-16</strain>
    </source>
</reference>
<organism>
    <name type="scientific">Archaeoglobus fulgidus (strain ATCC 49558 / DSM 4304 / JCM 9628 / NBRC 100126 / VC-16)</name>
    <dbReference type="NCBI Taxonomy" id="224325"/>
    <lineage>
        <taxon>Archaea</taxon>
        <taxon>Methanobacteriati</taxon>
        <taxon>Methanobacteriota</taxon>
        <taxon>Archaeoglobi</taxon>
        <taxon>Archaeoglobales</taxon>
        <taxon>Archaeoglobaceae</taxon>
        <taxon>Archaeoglobus</taxon>
    </lineage>
</organism>
<comment type="function">
    <text evidence="1">Component of the A-type ATP synthase that produces ATP from ADP in the presence of a proton gradient across the membrane.</text>
</comment>
<comment type="subunit">
    <text evidence="1">Has multiple subunits with at least A(3), B(3), C, D, E, F, H, I and proteolipid K(x).</text>
</comment>
<comment type="subcellular location">
    <subcellularLocation>
        <location evidence="1">Cell membrane</location>
        <topology evidence="1">Peripheral membrane protein</topology>
    </subcellularLocation>
</comment>
<comment type="similarity">
    <text evidence="1">Belongs to the V-ATPase D subunit family.</text>
</comment>
<feature type="chain" id="PRO_0000144246" description="A-type ATP synthase subunit D">
    <location>
        <begin position="1"/>
        <end position="209"/>
    </location>
</feature>
<evidence type="ECO:0000255" key="1">
    <source>
        <dbReference type="HAMAP-Rule" id="MF_00271"/>
    </source>
</evidence>